<feature type="chain" id="PRO_0000133152" description="Replication protein E1">
    <location>
        <begin position="1"/>
        <end position="644"/>
    </location>
</feature>
<feature type="domain" description="SF3 helicase" evidence="1">
    <location>
        <begin position="445"/>
        <end position="595"/>
    </location>
</feature>
<feature type="region of interest" description="DNA-binding region" evidence="1">
    <location>
        <begin position="180"/>
        <end position="346"/>
    </location>
</feature>
<feature type="short sequence motif" description="Nuclear localization signal" evidence="1">
    <location>
        <begin position="86"/>
        <end position="88"/>
    </location>
</feature>
<feature type="binding site" evidence="1">
    <location>
        <begin position="471"/>
        <end position="478"/>
    </location>
    <ligand>
        <name>ATP</name>
        <dbReference type="ChEBI" id="CHEBI:30616"/>
    </ligand>
</feature>
<feature type="modified residue" description="Phosphoserine; by host" evidence="1">
    <location>
        <position position="92"/>
    </location>
</feature>
<feature type="modified residue" description="Phosphoserine; by host" evidence="1">
    <location>
        <position position="96"/>
    </location>
</feature>
<feature type="cross-link" description="Glycyl lysine isopeptide (Lys-Gly) (interchain with G-Cter in SUMO)" evidence="1">
    <location>
        <position position="552"/>
    </location>
</feature>
<accession>Q81966</accession>
<organism>
    <name type="scientific">Human papillomavirus 59</name>
    <dbReference type="NCBI Taxonomy" id="37115"/>
    <lineage>
        <taxon>Viruses</taxon>
        <taxon>Monodnaviria</taxon>
        <taxon>Shotokuvirae</taxon>
        <taxon>Cossaviricota</taxon>
        <taxon>Papovaviricetes</taxon>
        <taxon>Zurhausenvirales</taxon>
        <taxon>Papillomaviridae</taxon>
        <taxon>Firstpapillomavirinae</taxon>
        <taxon>Alphapapillomavirus</taxon>
        <taxon>Alphapapillomavirus 7</taxon>
    </lineage>
</organism>
<sequence>MADSEGTDGEGTGCNGWFFVQAIVDKKTGDKISDDEDENATDTGSDLVDFIDDTTTICVQAERETAQALFNVQEAQRDAREMHVLKRKFGCSIENSSEKAAAGKKAKSPLQEISVNVNHPKVKRRLITVPDSGYGYSEVEMLETQVTVENTGNGDSNGSVCSDSQIDCSDSSNMDVENIVPTSPTNQLLQLLHSKNKKAAMYAKFKELYGLSFQDLVRTFKSDRTTCSDWVTAIFGVNPTVAEGFKTLIQPYVLYAHIQCLDCAWGVVILALLRYKCGKNRITVAKGLSTLLHVPDTCMLIEPPKLRSGVAALYWYRTGMSNISEVIGETPEWIQRLTIIQHGVDDSVFDLSEMIQWAFDNDLTDESDIAYEYALIADSNSNAAAFLKSNCQAKYLKDCAVMCRHYKRAQKRQMSMSQWIKWRCDKIEEGGDWKPIVQFLRYQGVEFITFLCALKDFLKGTPKRNCIVLCGPANTGKSYFGMSLLHFLQGTVISHVNSNSHFWLEPLTDRKLAMLDDATDSCWTYFDTYMRNALDGNPISVDRKHRHLVQIKCPPMLITSNTNPVTDNRWPYLNSRLMVFKFPNKLPFDKNRNPVYTINDRNWKCFFERTWCRLDLNEEEEDADSDGHPFAAFKCVTGSNIRTL</sequence>
<reference key="1">
    <citation type="journal article" date="1994" name="Virology">
        <title>Nucleotide sequence and phylogenetic classification of human papillomavirus type 59.</title>
        <authorList>
            <person name="Rho J."/>
            <person name="Roy-Burman A."/>
            <person name="Kim H."/>
            <person name="de Villiers E.-M."/>
            <person name="Matsukura T."/>
            <person name="Choe J."/>
        </authorList>
    </citation>
    <scope>NUCLEOTIDE SEQUENCE [GENOMIC DNA]</scope>
</reference>
<name>VE1_HPV59</name>
<protein>
    <recommendedName>
        <fullName evidence="1">Replication protein E1</fullName>
        <ecNumber evidence="1">5.6.2.4</ecNumber>
    </recommendedName>
    <alternativeName>
        <fullName evidence="1">ATP-dependent helicase E1</fullName>
    </alternativeName>
    <alternativeName>
        <fullName evidence="1">DNA 3'-5' helicase E1</fullName>
    </alternativeName>
</protein>
<gene>
    <name evidence="1" type="primary">E1</name>
</gene>
<comment type="function">
    <text evidence="1">ATP-dependent DNA 3'-5' helicase required for initiation of viral DNA replication. It forms a complex with the viral E2 protein. The E1-E2 complex binds to the replication origin which contains binding sites for both proteins. During the initial step, a dimer of E1 interacts with a dimer of protein E2 leading to a complex that binds the viral origin of replication with high specificity. Then, a second dimer of E1 displaces the E2 dimer in an ATP-dependent manner to form the E1 tetramer. Following this, two E1 monomers are added to each half of the site, which results in the formation of two E1 trimers on the viral ori. Subsequently, two hexamers will be created. The double hexamer acts as a bi-directional helicase machinery and unwinds the viral DNA and then recruits the host DNA polymerase to start replication.</text>
</comment>
<comment type="catalytic activity">
    <reaction evidence="1">
        <text>Couples ATP hydrolysis with the unwinding of duplex DNA by translocating in the 3'-5' direction.</text>
        <dbReference type="EC" id="5.6.2.4"/>
    </reaction>
</comment>
<comment type="catalytic activity">
    <reaction evidence="1">
        <text>ATP + H2O = ADP + phosphate + H(+)</text>
        <dbReference type="Rhea" id="RHEA:13065"/>
        <dbReference type="ChEBI" id="CHEBI:15377"/>
        <dbReference type="ChEBI" id="CHEBI:15378"/>
        <dbReference type="ChEBI" id="CHEBI:30616"/>
        <dbReference type="ChEBI" id="CHEBI:43474"/>
        <dbReference type="ChEBI" id="CHEBI:456216"/>
        <dbReference type="EC" id="5.6.2.4"/>
    </reaction>
</comment>
<comment type="subunit">
    <text evidence="1">Can form hexamers. Interacts with E2 protein; this interaction increases E1 DNA binding specificity. Interacts with host DNA polymerase subunit POLA2. Interacts with host single stranded DNA-binding protein RPA1. Interacts with host TOP1; this interaction stimulates the enzymatic activity of TOP1.</text>
</comment>
<comment type="subcellular location">
    <subcellularLocation>
        <location evidence="1">Host nucleus</location>
    </subcellularLocation>
</comment>
<comment type="PTM">
    <text evidence="1">Phosphorylated.</text>
</comment>
<comment type="PTM">
    <text evidence="1">Sumoylated.</text>
</comment>
<comment type="similarity">
    <text evidence="1">Belongs to the papillomaviridae E1 protein family.</text>
</comment>
<organismHost>
    <name type="scientific">Homo sapiens</name>
    <name type="common">Human</name>
    <dbReference type="NCBI Taxonomy" id="9606"/>
</organismHost>
<evidence type="ECO:0000255" key="1">
    <source>
        <dbReference type="HAMAP-Rule" id="MF_04000"/>
    </source>
</evidence>
<dbReference type="EC" id="5.6.2.4" evidence="1"/>
<dbReference type="EMBL" id="X77858">
    <property type="protein sequence ID" value="CAA54851.1"/>
    <property type="molecule type" value="Genomic_DNA"/>
</dbReference>
<dbReference type="SMR" id="Q81966"/>
<dbReference type="Proteomes" id="UP000149637">
    <property type="component" value="Genome"/>
</dbReference>
<dbReference type="GO" id="GO:0042025">
    <property type="term" value="C:host cell nucleus"/>
    <property type="evidence" value="ECO:0007669"/>
    <property type="project" value="UniProtKB-SubCell"/>
</dbReference>
<dbReference type="GO" id="GO:0005524">
    <property type="term" value="F:ATP binding"/>
    <property type="evidence" value="ECO:0007669"/>
    <property type="project" value="UniProtKB-UniRule"/>
</dbReference>
<dbReference type="GO" id="GO:0016887">
    <property type="term" value="F:ATP hydrolysis activity"/>
    <property type="evidence" value="ECO:0007669"/>
    <property type="project" value="RHEA"/>
</dbReference>
<dbReference type="GO" id="GO:0003677">
    <property type="term" value="F:DNA binding"/>
    <property type="evidence" value="ECO:0007669"/>
    <property type="project" value="UniProtKB-UniRule"/>
</dbReference>
<dbReference type="GO" id="GO:0003678">
    <property type="term" value="F:DNA helicase activity"/>
    <property type="evidence" value="ECO:0007669"/>
    <property type="project" value="UniProtKB-UniRule"/>
</dbReference>
<dbReference type="GO" id="GO:0006260">
    <property type="term" value="P:DNA replication"/>
    <property type="evidence" value="ECO:0007669"/>
    <property type="project" value="UniProtKB-UniRule"/>
</dbReference>
<dbReference type="Gene3D" id="3.40.1310.10">
    <property type="match status" value="1"/>
</dbReference>
<dbReference type="Gene3D" id="3.40.50.300">
    <property type="entry name" value="P-loop containing nucleotide triphosphate hydrolases"/>
    <property type="match status" value="1"/>
</dbReference>
<dbReference type="Gene3D" id="1.10.10.510">
    <property type="entry name" value="Zinc finger, large T-antigen D1 domain"/>
    <property type="match status" value="1"/>
</dbReference>
<dbReference type="HAMAP" id="MF_04000">
    <property type="entry name" value="PPV_E1"/>
    <property type="match status" value="1"/>
</dbReference>
<dbReference type="InterPro" id="IPR014015">
    <property type="entry name" value="Helicase_SF3_DNA-vir"/>
</dbReference>
<dbReference type="InterPro" id="IPR027417">
    <property type="entry name" value="P-loop_NTPase"/>
</dbReference>
<dbReference type="InterPro" id="IPR001177">
    <property type="entry name" value="PPV_DNA_helicase_E1_C"/>
</dbReference>
<dbReference type="InterPro" id="IPR014000">
    <property type="entry name" value="PPV_DNA_helicase_E1_N"/>
</dbReference>
<dbReference type="InterPro" id="IPR046832">
    <property type="entry name" value="PPV_E1_DBD"/>
</dbReference>
<dbReference type="InterPro" id="IPR046935">
    <property type="entry name" value="PPV_E1_DBD_sf"/>
</dbReference>
<dbReference type="InterPro" id="IPR016393">
    <property type="entry name" value="Rep_E1_papillomaV"/>
</dbReference>
<dbReference type="InterPro" id="IPR037102">
    <property type="entry name" value="Znf_lg_T-Ag_D1_dom_sf"/>
</dbReference>
<dbReference type="Pfam" id="PF00519">
    <property type="entry name" value="PPV_E1_C"/>
    <property type="match status" value="1"/>
</dbReference>
<dbReference type="Pfam" id="PF20450">
    <property type="entry name" value="PPV_E1_DBD"/>
    <property type="match status" value="1"/>
</dbReference>
<dbReference type="Pfam" id="PF00524">
    <property type="entry name" value="PPV_E1_N"/>
    <property type="match status" value="1"/>
</dbReference>
<dbReference type="PIRSF" id="PIRSF003383">
    <property type="entry name" value="Rep_E1_papillomaV"/>
    <property type="match status" value="1"/>
</dbReference>
<dbReference type="SUPFAM" id="SSF55464">
    <property type="entry name" value="Origin of replication-binding domain, RBD-like"/>
    <property type="match status" value="1"/>
</dbReference>
<dbReference type="SUPFAM" id="SSF52540">
    <property type="entry name" value="P-loop containing nucleoside triphosphate hydrolases"/>
    <property type="match status" value="1"/>
</dbReference>
<dbReference type="PROSITE" id="PS51206">
    <property type="entry name" value="SF3_HELICASE_1"/>
    <property type="match status" value="1"/>
</dbReference>
<proteinExistence type="inferred from homology"/>
<keyword id="KW-0067">ATP-binding</keyword>
<keyword id="KW-0235">DNA replication</keyword>
<keyword id="KW-0238">DNA-binding</keyword>
<keyword id="KW-0244">Early protein</keyword>
<keyword id="KW-0347">Helicase</keyword>
<keyword id="KW-1048">Host nucleus</keyword>
<keyword id="KW-0378">Hydrolase</keyword>
<keyword id="KW-0413">Isomerase</keyword>
<keyword id="KW-1017">Isopeptide bond</keyword>
<keyword id="KW-0547">Nucleotide-binding</keyword>
<keyword id="KW-0597">Phosphoprotein</keyword>
<keyword id="KW-1185">Reference proteome</keyword>
<keyword id="KW-0832">Ubl conjugation</keyword>